<name>SYSM_MOUSE</name>
<gene>
    <name type="primary">Sars2</name>
    <name type="synonym">Sarsm</name>
</gene>
<evidence type="ECO:0000250" key="1">
    <source>
        <dbReference type="UniProtKB" id="Q9N0F3"/>
    </source>
</evidence>
<evidence type="ECO:0000256" key="2">
    <source>
        <dbReference type="SAM" id="MobiDB-lite"/>
    </source>
</evidence>
<evidence type="ECO:0000269" key="3">
    <source>
    </source>
</evidence>
<evidence type="ECO:0000305" key="4"/>
<evidence type="ECO:0000305" key="5">
    <source>
    </source>
</evidence>
<evidence type="ECO:0007744" key="6">
    <source>
    </source>
</evidence>
<evidence type="ECO:0007744" key="7">
    <source>
    </source>
</evidence>
<proteinExistence type="evidence at protein level"/>
<comment type="function">
    <text evidence="1">Catalyzes the attachment of serine to tRNA(Ser). Is also probably able to aminoacylate tRNA(Sec) with serine, to form the misacylated tRNA L-seryl-tRNA(Sec), which will be further converted into selenocysteinyl-tRNA(Sec).</text>
</comment>
<comment type="catalytic activity">
    <reaction evidence="1">
        <text>tRNA(Ser) + L-serine + ATP = L-seryl-tRNA(Ser) + AMP + diphosphate + H(+)</text>
        <dbReference type="Rhea" id="RHEA:12292"/>
        <dbReference type="Rhea" id="RHEA-COMP:9669"/>
        <dbReference type="Rhea" id="RHEA-COMP:9703"/>
        <dbReference type="ChEBI" id="CHEBI:15378"/>
        <dbReference type="ChEBI" id="CHEBI:30616"/>
        <dbReference type="ChEBI" id="CHEBI:33019"/>
        <dbReference type="ChEBI" id="CHEBI:33384"/>
        <dbReference type="ChEBI" id="CHEBI:78442"/>
        <dbReference type="ChEBI" id="CHEBI:78533"/>
        <dbReference type="ChEBI" id="CHEBI:456215"/>
        <dbReference type="EC" id="6.1.1.11"/>
    </reaction>
</comment>
<comment type="catalytic activity">
    <reaction evidence="1">
        <text>tRNA(Sec) + L-serine + ATP = L-seryl-tRNA(Sec) + AMP + diphosphate + H(+)</text>
        <dbReference type="Rhea" id="RHEA:42580"/>
        <dbReference type="Rhea" id="RHEA-COMP:9742"/>
        <dbReference type="Rhea" id="RHEA-COMP:10128"/>
        <dbReference type="ChEBI" id="CHEBI:15378"/>
        <dbReference type="ChEBI" id="CHEBI:30616"/>
        <dbReference type="ChEBI" id="CHEBI:33019"/>
        <dbReference type="ChEBI" id="CHEBI:33384"/>
        <dbReference type="ChEBI" id="CHEBI:78442"/>
        <dbReference type="ChEBI" id="CHEBI:78533"/>
        <dbReference type="ChEBI" id="CHEBI:456215"/>
        <dbReference type="EC" id="6.1.1.11"/>
    </reaction>
</comment>
<comment type="pathway">
    <text>Aminoacyl-tRNA biosynthesis; selenocysteinyl-tRNA(Sec) biosynthesis; L-seryl-tRNA(Sec) from L-serine and tRNA(Sec): step 1/1.</text>
</comment>
<comment type="subunit">
    <text evidence="1">Homodimer. The tRNA molecule probably binds across the dimer.</text>
</comment>
<comment type="subcellular location">
    <subcellularLocation>
        <location evidence="5">Mitochondrion matrix</location>
    </subcellularLocation>
</comment>
<comment type="tissue specificity">
    <text evidence="3">Ubiquitous.</text>
</comment>
<comment type="domain">
    <text evidence="1">Consists of two distinct domains, a catalytic core and a N-terminal extension that is involved in tRNA binding.</text>
</comment>
<comment type="similarity">
    <text evidence="4">Belongs to the class-II aminoacyl-tRNA synthetase family. Type-1 seryl-tRNA synthetase subfamily.</text>
</comment>
<organism>
    <name type="scientific">Mus musculus</name>
    <name type="common">Mouse</name>
    <dbReference type="NCBI Taxonomy" id="10090"/>
    <lineage>
        <taxon>Eukaryota</taxon>
        <taxon>Metazoa</taxon>
        <taxon>Chordata</taxon>
        <taxon>Craniata</taxon>
        <taxon>Vertebrata</taxon>
        <taxon>Euteleostomi</taxon>
        <taxon>Mammalia</taxon>
        <taxon>Eutheria</taxon>
        <taxon>Euarchontoglires</taxon>
        <taxon>Glires</taxon>
        <taxon>Rodentia</taxon>
        <taxon>Myomorpha</taxon>
        <taxon>Muroidea</taxon>
        <taxon>Muridae</taxon>
        <taxon>Murinae</taxon>
        <taxon>Mus</taxon>
        <taxon>Mus</taxon>
    </lineage>
</organism>
<sequence>MAASMARLWWPFLARQGLRSRGRCVCSQNPRRSFATEKRVRNLLYEHAREGYSELPYLDMESVCACPEKAARSLELRKGELRPADLPAIISTWQELRQLREQIRSLEAEKEAVAEAVRALLANQDSDQVQKDPQYQGLRARGREIRKQLTPLYPQETQLEEQLYQQALRLPNQTHPDTPVGDESQARVVRVVGEKPAFSFQPRGHLEIGEKLDIIRQKRLSHVSGHRSYYLRGAGALLQHGLVNFTLSKLVSRGFTPMTVPDLLRGAVFEGCGMTPNANPSQIYNIDPSRFEDLNLAGTAEVGLAGYFMDHSVAFRDLPVRMVCASTCYRAETDTGKEPWGLYRVHHFTKVEMFGVTGPGLEQSSQLLDEFLSLQVEILTELGLHFRVLDMPTQELGLPAYRKFDIEAWMPGRGRYGEVTSASNCTDFQSRRLYIMFETETGELQFAHTVNATACAVPRVLIALLESNQQKDGSVLVPAALQPYLGTDRITAPTHVPLQYIGPNQPQKPRLPGQSATR</sequence>
<reference key="1">
    <citation type="journal article" date="2000" name="J. Biol. Chem.">
        <title>Characterization and tRNA recognition of mammalian mitochondrial seryl-tRNA synthetase.</title>
        <authorList>
            <person name="Yokogawa T."/>
            <person name="Shimada N."/>
            <person name="Takeuchi N."/>
            <person name="Benkowski L."/>
            <person name="Suzuki T."/>
            <person name="Omori A."/>
            <person name="Ueda T."/>
            <person name="Nishikawa K."/>
            <person name="Spremulli L.L."/>
            <person name="Watanabe K."/>
        </authorList>
    </citation>
    <scope>NUCLEOTIDE SEQUENCE [MRNA]</scope>
</reference>
<reference key="2">
    <citation type="journal article" date="2005" name="Science">
        <title>The transcriptional landscape of the mammalian genome.</title>
        <authorList>
            <person name="Carninci P."/>
            <person name="Kasukawa T."/>
            <person name="Katayama S."/>
            <person name="Gough J."/>
            <person name="Frith M.C."/>
            <person name="Maeda N."/>
            <person name="Oyama R."/>
            <person name="Ravasi T."/>
            <person name="Lenhard B."/>
            <person name="Wells C."/>
            <person name="Kodzius R."/>
            <person name="Shimokawa K."/>
            <person name="Bajic V.B."/>
            <person name="Brenner S.E."/>
            <person name="Batalov S."/>
            <person name="Forrest A.R."/>
            <person name="Zavolan M."/>
            <person name="Davis M.J."/>
            <person name="Wilming L.G."/>
            <person name="Aidinis V."/>
            <person name="Allen J.E."/>
            <person name="Ambesi-Impiombato A."/>
            <person name="Apweiler R."/>
            <person name="Aturaliya R.N."/>
            <person name="Bailey T.L."/>
            <person name="Bansal M."/>
            <person name="Baxter L."/>
            <person name="Beisel K.W."/>
            <person name="Bersano T."/>
            <person name="Bono H."/>
            <person name="Chalk A.M."/>
            <person name="Chiu K.P."/>
            <person name="Choudhary V."/>
            <person name="Christoffels A."/>
            <person name="Clutterbuck D.R."/>
            <person name="Crowe M.L."/>
            <person name="Dalla E."/>
            <person name="Dalrymple B.P."/>
            <person name="de Bono B."/>
            <person name="Della Gatta G."/>
            <person name="di Bernardo D."/>
            <person name="Down T."/>
            <person name="Engstrom P."/>
            <person name="Fagiolini M."/>
            <person name="Faulkner G."/>
            <person name="Fletcher C.F."/>
            <person name="Fukushima T."/>
            <person name="Furuno M."/>
            <person name="Futaki S."/>
            <person name="Gariboldi M."/>
            <person name="Georgii-Hemming P."/>
            <person name="Gingeras T.R."/>
            <person name="Gojobori T."/>
            <person name="Green R.E."/>
            <person name="Gustincich S."/>
            <person name="Harbers M."/>
            <person name="Hayashi Y."/>
            <person name="Hensch T.K."/>
            <person name="Hirokawa N."/>
            <person name="Hill D."/>
            <person name="Huminiecki L."/>
            <person name="Iacono M."/>
            <person name="Ikeo K."/>
            <person name="Iwama A."/>
            <person name="Ishikawa T."/>
            <person name="Jakt M."/>
            <person name="Kanapin A."/>
            <person name="Katoh M."/>
            <person name="Kawasawa Y."/>
            <person name="Kelso J."/>
            <person name="Kitamura H."/>
            <person name="Kitano H."/>
            <person name="Kollias G."/>
            <person name="Krishnan S.P."/>
            <person name="Kruger A."/>
            <person name="Kummerfeld S.K."/>
            <person name="Kurochkin I.V."/>
            <person name="Lareau L.F."/>
            <person name="Lazarevic D."/>
            <person name="Lipovich L."/>
            <person name="Liu J."/>
            <person name="Liuni S."/>
            <person name="McWilliam S."/>
            <person name="Madan Babu M."/>
            <person name="Madera M."/>
            <person name="Marchionni L."/>
            <person name="Matsuda H."/>
            <person name="Matsuzawa S."/>
            <person name="Miki H."/>
            <person name="Mignone F."/>
            <person name="Miyake S."/>
            <person name="Morris K."/>
            <person name="Mottagui-Tabar S."/>
            <person name="Mulder N."/>
            <person name="Nakano N."/>
            <person name="Nakauchi H."/>
            <person name="Ng P."/>
            <person name="Nilsson R."/>
            <person name="Nishiguchi S."/>
            <person name="Nishikawa S."/>
            <person name="Nori F."/>
            <person name="Ohara O."/>
            <person name="Okazaki Y."/>
            <person name="Orlando V."/>
            <person name="Pang K.C."/>
            <person name="Pavan W.J."/>
            <person name="Pavesi G."/>
            <person name="Pesole G."/>
            <person name="Petrovsky N."/>
            <person name="Piazza S."/>
            <person name="Reed J."/>
            <person name="Reid J.F."/>
            <person name="Ring B.Z."/>
            <person name="Ringwald M."/>
            <person name="Rost B."/>
            <person name="Ruan Y."/>
            <person name="Salzberg S.L."/>
            <person name="Sandelin A."/>
            <person name="Schneider C."/>
            <person name="Schoenbach C."/>
            <person name="Sekiguchi K."/>
            <person name="Semple C.A."/>
            <person name="Seno S."/>
            <person name="Sessa L."/>
            <person name="Sheng Y."/>
            <person name="Shibata Y."/>
            <person name="Shimada H."/>
            <person name="Shimada K."/>
            <person name="Silva D."/>
            <person name="Sinclair B."/>
            <person name="Sperling S."/>
            <person name="Stupka E."/>
            <person name="Sugiura K."/>
            <person name="Sultana R."/>
            <person name="Takenaka Y."/>
            <person name="Taki K."/>
            <person name="Tammoja K."/>
            <person name="Tan S.L."/>
            <person name="Tang S."/>
            <person name="Taylor M.S."/>
            <person name="Tegner J."/>
            <person name="Teichmann S.A."/>
            <person name="Ueda H.R."/>
            <person name="van Nimwegen E."/>
            <person name="Verardo R."/>
            <person name="Wei C.L."/>
            <person name="Yagi K."/>
            <person name="Yamanishi H."/>
            <person name="Zabarovsky E."/>
            <person name="Zhu S."/>
            <person name="Zimmer A."/>
            <person name="Hide W."/>
            <person name="Bult C."/>
            <person name="Grimmond S.M."/>
            <person name="Teasdale R.D."/>
            <person name="Liu E.T."/>
            <person name="Brusic V."/>
            <person name="Quackenbush J."/>
            <person name="Wahlestedt C."/>
            <person name="Mattick J.S."/>
            <person name="Hume D.A."/>
            <person name="Kai C."/>
            <person name="Sasaki D."/>
            <person name="Tomaru Y."/>
            <person name="Fukuda S."/>
            <person name="Kanamori-Katayama M."/>
            <person name="Suzuki M."/>
            <person name="Aoki J."/>
            <person name="Arakawa T."/>
            <person name="Iida J."/>
            <person name="Imamura K."/>
            <person name="Itoh M."/>
            <person name="Kato T."/>
            <person name="Kawaji H."/>
            <person name="Kawagashira N."/>
            <person name="Kawashima T."/>
            <person name="Kojima M."/>
            <person name="Kondo S."/>
            <person name="Konno H."/>
            <person name="Nakano K."/>
            <person name="Ninomiya N."/>
            <person name="Nishio T."/>
            <person name="Okada M."/>
            <person name="Plessy C."/>
            <person name="Shibata K."/>
            <person name="Shiraki T."/>
            <person name="Suzuki S."/>
            <person name="Tagami M."/>
            <person name="Waki K."/>
            <person name="Watahiki A."/>
            <person name="Okamura-Oho Y."/>
            <person name="Suzuki H."/>
            <person name="Kawai J."/>
            <person name="Hayashizaki Y."/>
        </authorList>
    </citation>
    <scope>NUCLEOTIDE SEQUENCE [LARGE SCALE MRNA]</scope>
    <source>
        <strain>C57BL/6J</strain>
        <tissue>Embryonic stem cell</tissue>
        <tissue>Head</tissue>
        <tissue>Oviduct</tissue>
    </source>
</reference>
<reference key="3">
    <citation type="submission" date="2005-09" db="EMBL/GenBank/DDBJ databases">
        <authorList>
            <person name="Mural R.J."/>
            <person name="Adams M.D."/>
            <person name="Myers E.W."/>
            <person name="Smith H.O."/>
            <person name="Venter J.C."/>
        </authorList>
    </citation>
    <scope>NUCLEOTIDE SEQUENCE [LARGE SCALE GENOMIC DNA]</scope>
</reference>
<reference key="4">
    <citation type="journal article" date="2004" name="Genome Res.">
        <title>The status, quality, and expansion of the NIH full-length cDNA project: the Mammalian Gene Collection (MGC).</title>
        <authorList>
            <consortium name="The MGC Project Team"/>
        </authorList>
    </citation>
    <scope>NUCLEOTIDE SEQUENCE [LARGE SCALE MRNA]</scope>
    <source>
        <strain>C57BL/6J</strain>
        <tissue>Brain</tissue>
    </source>
</reference>
<reference key="5">
    <citation type="journal article" date="2004" name="Biochem. Biophys. Res. Commun.">
        <title>Genomic organization, expression, and subcellular localization of mouse mitochondrial seryl-tRNA synthetase.</title>
        <authorList>
            <person name="Gibbons W.J. Jr."/>
            <person name="Yan Q."/>
            <person name="Li R."/>
            <person name="Li X."/>
            <person name="Guan M.X."/>
        </authorList>
    </citation>
    <scope>SUBCELLULAR LOCATION</scope>
    <scope>TISSUE SPECIFICITY</scope>
</reference>
<reference key="6">
    <citation type="journal article" date="2010" name="Cell">
        <title>A tissue-specific atlas of mouse protein phosphorylation and expression.</title>
        <authorList>
            <person name="Huttlin E.L."/>
            <person name="Jedrychowski M.P."/>
            <person name="Elias J.E."/>
            <person name="Goswami T."/>
            <person name="Rad R."/>
            <person name="Beausoleil S.A."/>
            <person name="Villen J."/>
            <person name="Haas W."/>
            <person name="Sowa M.E."/>
            <person name="Gygi S.P."/>
        </authorList>
    </citation>
    <scope>IDENTIFICATION BY MASS SPECTROMETRY [LARGE SCALE ANALYSIS]</scope>
    <source>
        <tissue>Brain</tissue>
        <tissue>Brown adipose tissue</tissue>
        <tissue>Heart</tissue>
        <tissue>Kidney</tissue>
        <tissue>Liver</tissue>
        <tissue>Pancreas</tissue>
        <tissue>Spleen</tissue>
        <tissue>Testis</tissue>
    </source>
</reference>
<reference key="7">
    <citation type="journal article" date="2013" name="Mol. Cell">
        <title>SIRT5-mediated lysine desuccinylation impacts diverse metabolic pathways.</title>
        <authorList>
            <person name="Park J."/>
            <person name="Chen Y."/>
            <person name="Tishkoff D.X."/>
            <person name="Peng C."/>
            <person name="Tan M."/>
            <person name="Dai L."/>
            <person name="Xie Z."/>
            <person name="Zhang Y."/>
            <person name="Zwaans B.M."/>
            <person name="Skinner M.E."/>
            <person name="Lombard D.B."/>
            <person name="Zhao Y."/>
        </authorList>
    </citation>
    <scope>SUCCINYLATION [LARGE SCALE ANALYSIS] AT LYS-195 AND LYS-337</scope>
    <scope>IDENTIFICATION BY MASS SPECTROMETRY [LARGE SCALE ANALYSIS]</scope>
    <source>
        <tissue>Liver</tissue>
    </source>
</reference>
<reference key="8">
    <citation type="journal article" date="2013" name="Proc. Natl. Acad. Sci. U.S.A.">
        <title>Label-free quantitative proteomics of the lysine acetylome in mitochondria identifies substrates of SIRT3 in metabolic pathways.</title>
        <authorList>
            <person name="Rardin M.J."/>
            <person name="Newman J.C."/>
            <person name="Held J.M."/>
            <person name="Cusack M.P."/>
            <person name="Sorensen D.J."/>
            <person name="Li B."/>
            <person name="Schilling B."/>
            <person name="Mooney S.D."/>
            <person name="Kahn C.R."/>
            <person name="Verdin E."/>
            <person name="Gibson B.W."/>
        </authorList>
    </citation>
    <scope>ACETYLATION [LARGE SCALE ANALYSIS] AT LYS-110</scope>
    <scope>IDENTIFICATION BY MASS SPECTROMETRY [LARGE SCALE ANALYSIS]</scope>
    <source>
        <tissue>Liver</tissue>
    </source>
</reference>
<feature type="transit peptide" description="Mitochondrion" evidence="1">
    <location>
        <begin position="1"/>
        <end position="34"/>
    </location>
</feature>
<feature type="chain" id="PRO_0000035823" description="Serine--tRNA ligase, mitochondrial">
    <location>
        <begin position="35"/>
        <end position="518"/>
    </location>
</feature>
<feature type="region of interest" description="Disordered" evidence="2">
    <location>
        <begin position="497"/>
        <end position="518"/>
    </location>
</feature>
<feature type="binding site" evidence="1">
    <location>
        <begin position="299"/>
        <end position="301"/>
    </location>
    <ligand>
        <name>L-serine</name>
        <dbReference type="ChEBI" id="CHEBI:33384"/>
    </ligand>
</feature>
<feature type="binding site" evidence="1">
    <location>
        <begin position="330"/>
        <end position="332"/>
    </location>
    <ligand>
        <name>ATP</name>
        <dbReference type="ChEBI" id="CHEBI:30616"/>
    </ligand>
</feature>
<feature type="binding site" evidence="1">
    <location>
        <position position="345"/>
    </location>
    <ligand>
        <name>ATP</name>
        <dbReference type="ChEBI" id="CHEBI:30616"/>
    </ligand>
</feature>
<feature type="binding site" evidence="1">
    <location>
        <position position="352"/>
    </location>
    <ligand>
        <name>L-serine</name>
        <dbReference type="ChEBI" id="CHEBI:33384"/>
    </ligand>
</feature>
<feature type="binding site" evidence="1">
    <location>
        <begin position="418"/>
        <end position="421"/>
    </location>
    <ligand>
        <name>ATP</name>
        <dbReference type="ChEBI" id="CHEBI:30616"/>
    </ligand>
</feature>
<feature type="binding site" evidence="1">
    <location>
        <position position="453"/>
    </location>
    <ligand>
        <name>L-serine</name>
        <dbReference type="ChEBI" id="CHEBI:33384"/>
    </ligand>
</feature>
<feature type="modified residue" description="N6-acetyllysine" evidence="6">
    <location>
        <position position="110"/>
    </location>
</feature>
<feature type="modified residue" description="N6-succinyllysine" evidence="7">
    <location>
        <position position="195"/>
    </location>
</feature>
<feature type="modified residue" description="N6-succinyllysine" evidence="7">
    <location>
        <position position="337"/>
    </location>
</feature>
<feature type="sequence conflict" description="In Ref. 1; BAA99558." evidence="4" ref="1">
    <original>L</original>
    <variation>V</variation>
    <location>
        <position position="237"/>
    </location>
</feature>
<keyword id="KW-0007">Acetylation</keyword>
<keyword id="KW-0030">Aminoacyl-tRNA synthetase</keyword>
<keyword id="KW-0067">ATP-binding</keyword>
<keyword id="KW-0436">Ligase</keyword>
<keyword id="KW-0496">Mitochondrion</keyword>
<keyword id="KW-0547">Nucleotide-binding</keyword>
<keyword id="KW-0648">Protein biosynthesis</keyword>
<keyword id="KW-1185">Reference proteome</keyword>
<keyword id="KW-0809">Transit peptide</keyword>
<protein>
    <recommendedName>
        <fullName>Serine--tRNA ligase, mitochondrial</fullName>
        <ecNumber>6.1.1.11</ecNumber>
    </recommendedName>
    <alternativeName>
        <fullName>SerRSmt</fullName>
    </alternativeName>
    <alternativeName>
        <fullName>Seryl-tRNA synthetase</fullName>
        <shortName>SerRS</shortName>
    </alternativeName>
    <alternativeName>
        <fullName>Seryl-tRNA(Ser/Sec) synthetase</fullName>
    </alternativeName>
</protein>
<dbReference type="EC" id="6.1.1.11"/>
<dbReference type="EMBL" id="AB029949">
    <property type="protein sequence ID" value="BAA99558.1"/>
    <property type="molecule type" value="mRNA"/>
</dbReference>
<dbReference type="EMBL" id="AK010491">
    <property type="protein sequence ID" value="BAB26981.1"/>
    <property type="molecule type" value="mRNA"/>
</dbReference>
<dbReference type="EMBL" id="AK087606">
    <property type="protein sequence ID" value="BAC39943.1"/>
    <property type="molecule type" value="mRNA"/>
</dbReference>
<dbReference type="EMBL" id="AK140760">
    <property type="protein sequence ID" value="BAE24469.1"/>
    <property type="molecule type" value="mRNA"/>
</dbReference>
<dbReference type="EMBL" id="CH466593">
    <property type="protein sequence ID" value="EDL24120.1"/>
    <property type="molecule type" value="Genomic_DNA"/>
</dbReference>
<dbReference type="EMBL" id="BC079664">
    <property type="protein sequence ID" value="AAH79664.1"/>
    <property type="molecule type" value="mRNA"/>
</dbReference>
<dbReference type="CCDS" id="CCDS21053.1"/>
<dbReference type="RefSeq" id="NP_076126.2">
    <property type="nucleotide sequence ID" value="NM_023637.3"/>
</dbReference>
<dbReference type="SMR" id="Q9JJL8"/>
<dbReference type="BioGRID" id="215073">
    <property type="interactions" value="16"/>
</dbReference>
<dbReference type="FunCoup" id="Q9JJL8">
    <property type="interactions" value="1526"/>
</dbReference>
<dbReference type="STRING" id="10090.ENSMUSP00000092216"/>
<dbReference type="GlyGen" id="Q9JJL8">
    <property type="glycosylation" value="2 sites, 1 N-linked glycan (1 site), 1 O-linked glycan (1 site)"/>
</dbReference>
<dbReference type="iPTMnet" id="Q9JJL8"/>
<dbReference type="PhosphoSitePlus" id="Q9JJL8"/>
<dbReference type="SwissPalm" id="Q9JJL8"/>
<dbReference type="PaxDb" id="10090-ENSMUSP00000092216"/>
<dbReference type="PeptideAtlas" id="Q9JJL8"/>
<dbReference type="ProteomicsDB" id="254719"/>
<dbReference type="Pumba" id="Q9JJL8"/>
<dbReference type="DNASU" id="71984"/>
<dbReference type="Ensembl" id="ENSMUST00000094632.6">
    <property type="protein sequence ID" value="ENSMUSP00000092216.5"/>
    <property type="gene ID" value="ENSMUSG00000070699.6"/>
</dbReference>
<dbReference type="GeneID" id="71984"/>
<dbReference type="KEGG" id="mmu:71984"/>
<dbReference type="UCSC" id="uc009fzq.3">
    <property type="organism name" value="mouse"/>
</dbReference>
<dbReference type="AGR" id="MGI:1919234"/>
<dbReference type="CTD" id="54938"/>
<dbReference type="MGI" id="MGI:1919234">
    <property type="gene designation" value="Sars2"/>
</dbReference>
<dbReference type="VEuPathDB" id="HostDB:ENSMUSG00000070699"/>
<dbReference type="eggNOG" id="KOG2509">
    <property type="taxonomic scope" value="Eukaryota"/>
</dbReference>
<dbReference type="GeneTree" id="ENSGT00940000153792"/>
<dbReference type="HOGENOM" id="CLU_023797_4_1_1"/>
<dbReference type="InParanoid" id="Q9JJL8"/>
<dbReference type="OMA" id="EQNCIDR"/>
<dbReference type="OrthoDB" id="10264585at2759"/>
<dbReference type="PhylomeDB" id="Q9JJL8"/>
<dbReference type="TreeFam" id="TF315020"/>
<dbReference type="BRENDA" id="6.1.1.11">
    <property type="organism ID" value="3474"/>
</dbReference>
<dbReference type="UniPathway" id="UPA00906">
    <property type="reaction ID" value="UER00895"/>
</dbReference>
<dbReference type="BioGRID-ORCS" id="71984">
    <property type="hits" value="26 hits in 78 CRISPR screens"/>
</dbReference>
<dbReference type="PRO" id="PR:Q9JJL8"/>
<dbReference type="Proteomes" id="UP000000589">
    <property type="component" value="Chromosome 7"/>
</dbReference>
<dbReference type="RNAct" id="Q9JJL8">
    <property type="molecule type" value="protein"/>
</dbReference>
<dbReference type="Bgee" id="ENSMUSG00000070699">
    <property type="expression patterns" value="Expressed in ectoplacental cone and 219 other cell types or tissues"/>
</dbReference>
<dbReference type="ExpressionAtlas" id="Q9JJL8">
    <property type="expression patterns" value="baseline and differential"/>
</dbReference>
<dbReference type="GO" id="GO:0005759">
    <property type="term" value="C:mitochondrial matrix"/>
    <property type="evidence" value="ECO:0007669"/>
    <property type="project" value="UniProtKB-SubCell"/>
</dbReference>
<dbReference type="GO" id="GO:0005739">
    <property type="term" value="C:mitochondrion"/>
    <property type="evidence" value="ECO:0000314"/>
    <property type="project" value="MGI"/>
</dbReference>
<dbReference type="GO" id="GO:0005524">
    <property type="term" value="F:ATP binding"/>
    <property type="evidence" value="ECO:0000250"/>
    <property type="project" value="UniProtKB"/>
</dbReference>
<dbReference type="GO" id="GO:0004828">
    <property type="term" value="F:serine-tRNA ligase activity"/>
    <property type="evidence" value="ECO:0000250"/>
    <property type="project" value="UniProtKB"/>
</dbReference>
<dbReference type="GO" id="GO:0006434">
    <property type="term" value="P:seryl-tRNA aminoacylation"/>
    <property type="evidence" value="ECO:0000250"/>
    <property type="project" value="UniProtKB"/>
</dbReference>
<dbReference type="CDD" id="cd00770">
    <property type="entry name" value="SerRS_core"/>
    <property type="match status" value="1"/>
</dbReference>
<dbReference type="FunFam" id="3.30.930.10:FF:000047">
    <property type="entry name" value="serine--tRNA ligase, mitochondrial isoform X2"/>
    <property type="match status" value="1"/>
</dbReference>
<dbReference type="FunFam" id="1.10.287.40:FF:000005">
    <property type="entry name" value="Seryl-tRNA synthetase 2, mitochondrial"/>
    <property type="match status" value="1"/>
</dbReference>
<dbReference type="Gene3D" id="3.30.930.10">
    <property type="entry name" value="Bira Bifunctional Protein, Domain 2"/>
    <property type="match status" value="1"/>
</dbReference>
<dbReference type="Gene3D" id="1.10.287.40">
    <property type="entry name" value="Serine-tRNA synthetase, tRNA binding domain"/>
    <property type="match status" value="1"/>
</dbReference>
<dbReference type="InterPro" id="IPR002314">
    <property type="entry name" value="aa-tRNA-synt_IIb"/>
</dbReference>
<dbReference type="InterPro" id="IPR006195">
    <property type="entry name" value="aa-tRNA-synth_II"/>
</dbReference>
<dbReference type="InterPro" id="IPR045864">
    <property type="entry name" value="aa-tRNA-synth_II/BPL/LPL"/>
</dbReference>
<dbReference type="InterPro" id="IPR002317">
    <property type="entry name" value="Ser-tRNA-ligase_type_1"/>
</dbReference>
<dbReference type="InterPro" id="IPR015866">
    <property type="entry name" value="Ser-tRNA-synth_1_N"/>
</dbReference>
<dbReference type="InterPro" id="IPR042103">
    <property type="entry name" value="SerRS_1_N_sf"/>
</dbReference>
<dbReference type="InterPro" id="IPR033729">
    <property type="entry name" value="SerRS_core"/>
</dbReference>
<dbReference type="InterPro" id="IPR010978">
    <property type="entry name" value="tRNA-bd_arm"/>
</dbReference>
<dbReference type="NCBIfam" id="TIGR00414">
    <property type="entry name" value="serS"/>
    <property type="match status" value="1"/>
</dbReference>
<dbReference type="PANTHER" id="PTHR11778">
    <property type="entry name" value="SERYL-TRNA SYNTHETASE"/>
    <property type="match status" value="1"/>
</dbReference>
<dbReference type="Pfam" id="PF02403">
    <property type="entry name" value="Seryl_tRNA_N"/>
    <property type="match status" value="1"/>
</dbReference>
<dbReference type="Pfam" id="PF00587">
    <property type="entry name" value="tRNA-synt_2b"/>
    <property type="match status" value="1"/>
</dbReference>
<dbReference type="PRINTS" id="PR00981">
    <property type="entry name" value="TRNASYNTHSER"/>
</dbReference>
<dbReference type="SUPFAM" id="SSF55681">
    <property type="entry name" value="Class II aaRS and biotin synthetases"/>
    <property type="match status" value="1"/>
</dbReference>
<dbReference type="SUPFAM" id="SSF46589">
    <property type="entry name" value="tRNA-binding arm"/>
    <property type="match status" value="1"/>
</dbReference>
<dbReference type="PROSITE" id="PS50862">
    <property type="entry name" value="AA_TRNA_LIGASE_II"/>
    <property type="match status" value="1"/>
</dbReference>
<accession>Q9JJL8</accession>
<accession>Q68FL2</accession>
<accession>Q9CWP1</accession>